<keyword id="KW-0028">Amino-acid biosynthesis</keyword>
<keyword id="KW-0055">Arginine biosynthesis</keyword>
<keyword id="KW-0963">Cytoplasm</keyword>
<keyword id="KW-0521">NADP</keyword>
<keyword id="KW-0560">Oxidoreductase</keyword>
<sequence length="344" mass="38387">MIKVGIIGATGYVGVELLRLLLNHSQIEIGAISSVSFDGQELDSIYKNFLGRTNLICTNMNEVIEKNDVIFTALPPGLSEDIATKIIENNKICIDMGADFRLSNEEEYKYWYGKNFSHPKLHKQSIYGLPELNKEKIRKSSLIANPGCYPTSIELGLIPLLKNLLIKPNGIICDSKSGTTGSGRSLSLNTHFPEENENFTPYKIGEHRHTPEIEEILSNIANTKVTITFTPHLLPINRGIISTIYCTPKEKIDLNSIHKIYTDFYKDKEFVNVLPLGDIASIKNVKLSNNCHISLHLNHRKDQIIIISAIDNMIKGAAGQAIQNMNIILGFKENEGLNLISPAF</sequence>
<proteinExistence type="inferred from homology"/>
<feature type="chain" id="PRO_1000096719" description="N-acetyl-gamma-glutamyl-phosphate reductase">
    <location>
        <begin position="1"/>
        <end position="344"/>
    </location>
</feature>
<feature type="active site" evidence="1">
    <location>
        <position position="148"/>
    </location>
</feature>
<comment type="function">
    <text evidence="1">Catalyzes the NADPH-dependent reduction of N-acetyl-5-glutamyl phosphate to yield N-acetyl-L-glutamate 5-semialdehyde.</text>
</comment>
<comment type="catalytic activity">
    <reaction evidence="1">
        <text>N-acetyl-L-glutamate 5-semialdehyde + phosphate + NADP(+) = N-acetyl-L-glutamyl 5-phosphate + NADPH + H(+)</text>
        <dbReference type="Rhea" id="RHEA:21588"/>
        <dbReference type="ChEBI" id="CHEBI:15378"/>
        <dbReference type="ChEBI" id="CHEBI:29123"/>
        <dbReference type="ChEBI" id="CHEBI:43474"/>
        <dbReference type="ChEBI" id="CHEBI:57783"/>
        <dbReference type="ChEBI" id="CHEBI:57936"/>
        <dbReference type="ChEBI" id="CHEBI:58349"/>
        <dbReference type="EC" id="1.2.1.38"/>
    </reaction>
</comment>
<comment type="pathway">
    <text evidence="1">Amino-acid biosynthesis; L-arginine biosynthesis; N(2)-acetyl-L-ornithine from L-glutamate: step 3/4.</text>
</comment>
<comment type="subcellular location">
    <subcellularLocation>
        <location evidence="1">Cytoplasm</location>
    </subcellularLocation>
</comment>
<comment type="similarity">
    <text evidence="1">Belongs to the NAGSA dehydrogenase family. Type 1 subfamily.</text>
</comment>
<evidence type="ECO:0000255" key="1">
    <source>
        <dbReference type="HAMAP-Rule" id="MF_00150"/>
    </source>
</evidence>
<dbReference type="EC" id="1.2.1.38" evidence="1"/>
<dbReference type="EMBL" id="CP001078">
    <property type="protein sequence ID" value="ACD52358.1"/>
    <property type="molecule type" value="Genomic_DNA"/>
</dbReference>
<dbReference type="RefSeq" id="WP_012450520.1">
    <property type="nucleotide sequence ID" value="NC_010723.1"/>
</dbReference>
<dbReference type="SMR" id="B2UYI2"/>
<dbReference type="KEGG" id="cbt:CLH_2867"/>
<dbReference type="HOGENOM" id="CLU_006384_0_1_9"/>
<dbReference type="UniPathway" id="UPA00068">
    <property type="reaction ID" value="UER00108"/>
</dbReference>
<dbReference type="GO" id="GO:0005737">
    <property type="term" value="C:cytoplasm"/>
    <property type="evidence" value="ECO:0007669"/>
    <property type="project" value="UniProtKB-SubCell"/>
</dbReference>
<dbReference type="GO" id="GO:0003942">
    <property type="term" value="F:N-acetyl-gamma-glutamyl-phosphate reductase activity"/>
    <property type="evidence" value="ECO:0007669"/>
    <property type="project" value="UniProtKB-UniRule"/>
</dbReference>
<dbReference type="GO" id="GO:0051287">
    <property type="term" value="F:NAD binding"/>
    <property type="evidence" value="ECO:0007669"/>
    <property type="project" value="InterPro"/>
</dbReference>
<dbReference type="GO" id="GO:0070401">
    <property type="term" value="F:NADP+ binding"/>
    <property type="evidence" value="ECO:0007669"/>
    <property type="project" value="InterPro"/>
</dbReference>
<dbReference type="GO" id="GO:0006526">
    <property type="term" value="P:L-arginine biosynthetic process"/>
    <property type="evidence" value="ECO:0007669"/>
    <property type="project" value="UniProtKB-UniRule"/>
</dbReference>
<dbReference type="CDD" id="cd23934">
    <property type="entry name" value="AGPR_1_C"/>
    <property type="match status" value="1"/>
</dbReference>
<dbReference type="CDD" id="cd17895">
    <property type="entry name" value="AGPR_1_N"/>
    <property type="match status" value="1"/>
</dbReference>
<dbReference type="FunFam" id="3.30.360.10:FF:000014">
    <property type="entry name" value="N-acetyl-gamma-glutamyl-phosphate reductase"/>
    <property type="match status" value="1"/>
</dbReference>
<dbReference type="Gene3D" id="3.30.360.10">
    <property type="entry name" value="Dihydrodipicolinate Reductase, domain 2"/>
    <property type="match status" value="1"/>
</dbReference>
<dbReference type="Gene3D" id="3.40.50.720">
    <property type="entry name" value="NAD(P)-binding Rossmann-like Domain"/>
    <property type="match status" value="1"/>
</dbReference>
<dbReference type="HAMAP" id="MF_00150">
    <property type="entry name" value="ArgC_type1"/>
    <property type="match status" value="1"/>
</dbReference>
<dbReference type="InterPro" id="IPR023013">
    <property type="entry name" value="AGPR_AS"/>
</dbReference>
<dbReference type="InterPro" id="IPR000706">
    <property type="entry name" value="AGPR_type-1"/>
</dbReference>
<dbReference type="InterPro" id="IPR036291">
    <property type="entry name" value="NAD(P)-bd_dom_sf"/>
</dbReference>
<dbReference type="InterPro" id="IPR050085">
    <property type="entry name" value="NAGSA_dehydrogenase"/>
</dbReference>
<dbReference type="InterPro" id="IPR000534">
    <property type="entry name" value="Semialdehyde_DH_NAD-bd"/>
</dbReference>
<dbReference type="NCBIfam" id="TIGR01850">
    <property type="entry name" value="argC"/>
    <property type="match status" value="1"/>
</dbReference>
<dbReference type="PANTHER" id="PTHR32338:SF10">
    <property type="entry name" value="N-ACETYL-GAMMA-GLUTAMYL-PHOSPHATE REDUCTASE, CHLOROPLASTIC-RELATED"/>
    <property type="match status" value="1"/>
</dbReference>
<dbReference type="PANTHER" id="PTHR32338">
    <property type="entry name" value="N-ACETYL-GAMMA-GLUTAMYL-PHOSPHATE REDUCTASE, CHLOROPLASTIC-RELATED-RELATED"/>
    <property type="match status" value="1"/>
</dbReference>
<dbReference type="Pfam" id="PF01118">
    <property type="entry name" value="Semialdhyde_dh"/>
    <property type="match status" value="1"/>
</dbReference>
<dbReference type="Pfam" id="PF22698">
    <property type="entry name" value="Semialdhyde_dhC_1"/>
    <property type="match status" value="1"/>
</dbReference>
<dbReference type="SMART" id="SM00859">
    <property type="entry name" value="Semialdhyde_dh"/>
    <property type="match status" value="1"/>
</dbReference>
<dbReference type="SUPFAM" id="SSF55347">
    <property type="entry name" value="Glyceraldehyde-3-phosphate dehydrogenase-like, C-terminal domain"/>
    <property type="match status" value="1"/>
</dbReference>
<dbReference type="SUPFAM" id="SSF51735">
    <property type="entry name" value="NAD(P)-binding Rossmann-fold domains"/>
    <property type="match status" value="1"/>
</dbReference>
<dbReference type="PROSITE" id="PS01224">
    <property type="entry name" value="ARGC"/>
    <property type="match status" value="1"/>
</dbReference>
<reference key="1">
    <citation type="submission" date="2008-05" db="EMBL/GenBank/DDBJ databases">
        <title>Complete genome sequence of Clostridium botulinum E3 str. Alaska E43.</title>
        <authorList>
            <person name="Brinkac L.M."/>
            <person name="Brown J.L."/>
            <person name="Bruce D."/>
            <person name="Detter C."/>
            <person name="Munk C."/>
            <person name="Smith L.A."/>
            <person name="Smith T.J."/>
            <person name="Sutton G."/>
            <person name="Brettin T.S."/>
        </authorList>
    </citation>
    <scope>NUCLEOTIDE SEQUENCE [LARGE SCALE GENOMIC DNA]</scope>
    <source>
        <strain>Alaska E43 / Type E3</strain>
    </source>
</reference>
<name>ARGC_CLOBA</name>
<protein>
    <recommendedName>
        <fullName evidence="1">N-acetyl-gamma-glutamyl-phosphate reductase</fullName>
        <shortName evidence="1">AGPR</shortName>
        <ecNumber evidence="1">1.2.1.38</ecNumber>
    </recommendedName>
    <alternativeName>
        <fullName evidence="1">N-acetyl-glutamate semialdehyde dehydrogenase</fullName>
        <shortName evidence="1">NAGSA dehydrogenase</shortName>
    </alternativeName>
</protein>
<gene>
    <name evidence="1" type="primary">argC</name>
    <name type="ordered locus">CLH_2867</name>
</gene>
<organism>
    <name type="scientific">Clostridium botulinum (strain Alaska E43 / Type E3)</name>
    <dbReference type="NCBI Taxonomy" id="508767"/>
    <lineage>
        <taxon>Bacteria</taxon>
        <taxon>Bacillati</taxon>
        <taxon>Bacillota</taxon>
        <taxon>Clostridia</taxon>
        <taxon>Eubacteriales</taxon>
        <taxon>Clostridiaceae</taxon>
        <taxon>Clostridium</taxon>
    </lineage>
</organism>
<accession>B2UYI2</accession>